<proteinExistence type="evidence at transcript level"/>
<keyword id="KW-1003">Cell membrane</keyword>
<keyword id="KW-1015">Disulfide bond</keyword>
<keyword id="KW-0297">G-protein coupled receptor</keyword>
<keyword id="KW-0325">Glycoprotein</keyword>
<keyword id="KW-0472">Membrane</keyword>
<keyword id="KW-0552">Olfaction</keyword>
<keyword id="KW-0675">Receptor</keyword>
<keyword id="KW-1185">Reference proteome</keyword>
<keyword id="KW-0716">Sensory transduction</keyword>
<keyword id="KW-0807">Transducer</keyword>
<keyword id="KW-0812">Transmembrane</keyword>
<keyword id="KW-1133">Transmembrane helix</keyword>
<reference key="1">
    <citation type="journal article" date="2004" name="Nature">
        <title>Genome sequence of the Brown Norway rat yields insights into mammalian evolution.</title>
        <authorList>
            <person name="Gibbs R.A."/>
            <person name="Weinstock G.M."/>
            <person name="Metzker M.L."/>
            <person name="Muzny D.M."/>
            <person name="Sodergren E.J."/>
            <person name="Scherer S."/>
            <person name="Scott G."/>
            <person name="Steffen D."/>
            <person name="Worley K.C."/>
            <person name="Burch P.E."/>
            <person name="Okwuonu G."/>
            <person name="Hines S."/>
            <person name="Lewis L."/>
            <person name="Deramo C."/>
            <person name="Delgado O."/>
            <person name="Dugan-Rocha S."/>
            <person name="Miner G."/>
            <person name="Morgan M."/>
            <person name="Hawes A."/>
            <person name="Gill R."/>
            <person name="Holt R.A."/>
            <person name="Adams M.D."/>
            <person name="Amanatides P.G."/>
            <person name="Baden-Tillson H."/>
            <person name="Barnstead M."/>
            <person name="Chin S."/>
            <person name="Evans C.A."/>
            <person name="Ferriera S."/>
            <person name="Fosler C."/>
            <person name="Glodek A."/>
            <person name="Gu Z."/>
            <person name="Jennings D."/>
            <person name="Kraft C.L."/>
            <person name="Nguyen T."/>
            <person name="Pfannkoch C.M."/>
            <person name="Sitter C."/>
            <person name="Sutton G.G."/>
            <person name="Venter J.C."/>
            <person name="Woodage T."/>
            <person name="Smith D."/>
            <person name="Lee H.-M."/>
            <person name="Gustafson E."/>
            <person name="Cahill P."/>
            <person name="Kana A."/>
            <person name="Doucette-Stamm L."/>
            <person name="Weinstock K."/>
            <person name="Fechtel K."/>
            <person name="Weiss R.B."/>
            <person name="Dunn D.M."/>
            <person name="Green E.D."/>
            <person name="Blakesley R.W."/>
            <person name="Bouffard G.G."/>
            <person name="De Jong P.J."/>
            <person name="Osoegawa K."/>
            <person name="Zhu B."/>
            <person name="Marra M."/>
            <person name="Schein J."/>
            <person name="Bosdet I."/>
            <person name="Fjell C."/>
            <person name="Jones S."/>
            <person name="Krzywinski M."/>
            <person name="Mathewson C."/>
            <person name="Siddiqui A."/>
            <person name="Wye N."/>
            <person name="McPherson J."/>
            <person name="Zhao S."/>
            <person name="Fraser C.M."/>
            <person name="Shetty J."/>
            <person name="Shatsman S."/>
            <person name="Geer K."/>
            <person name="Chen Y."/>
            <person name="Abramzon S."/>
            <person name="Nierman W.C."/>
            <person name="Havlak P.H."/>
            <person name="Chen R."/>
            <person name="Durbin K.J."/>
            <person name="Egan A."/>
            <person name="Ren Y."/>
            <person name="Song X.-Z."/>
            <person name="Li B."/>
            <person name="Liu Y."/>
            <person name="Qin X."/>
            <person name="Cawley S."/>
            <person name="Cooney A.J."/>
            <person name="D'Souza L.M."/>
            <person name="Martin K."/>
            <person name="Wu J.Q."/>
            <person name="Gonzalez-Garay M.L."/>
            <person name="Jackson A.R."/>
            <person name="Kalafus K.J."/>
            <person name="McLeod M.P."/>
            <person name="Milosavljevic A."/>
            <person name="Virk D."/>
            <person name="Volkov A."/>
            <person name="Wheeler D.A."/>
            <person name="Zhang Z."/>
            <person name="Bailey J.A."/>
            <person name="Eichler E.E."/>
            <person name="Tuzun E."/>
            <person name="Birney E."/>
            <person name="Mongin E."/>
            <person name="Ureta-Vidal A."/>
            <person name="Woodwark C."/>
            <person name="Zdobnov E."/>
            <person name="Bork P."/>
            <person name="Suyama M."/>
            <person name="Torrents D."/>
            <person name="Alexandersson M."/>
            <person name="Trask B.J."/>
            <person name="Young J.M."/>
            <person name="Huang H."/>
            <person name="Wang H."/>
            <person name="Xing H."/>
            <person name="Daniels S."/>
            <person name="Gietzen D."/>
            <person name="Schmidt J."/>
            <person name="Stevens K."/>
            <person name="Vitt U."/>
            <person name="Wingrove J."/>
            <person name="Camara F."/>
            <person name="Mar Alba M."/>
            <person name="Abril J.F."/>
            <person name="Guigo R."/>
            <person name="Smit A."/>
            <person name="Dubchak I."/>
            <person name="Rubin E.M."/>
            <person name="Couronne O."/>
            <person name="Poliakov A."/>
            <person name="Huebner N."/>
            <person name="Ganten D."/>
            <person name="Goesele C."/>
            <person name="Hummel O."/>
            <person name="Kreitler T."/>
            <person name="Lee Y.-A."/>
            <person name="Monti J."/>
            <person name="Schulz H."/>
            <person name="Zimdahl H."/>
            <person name="Himmelbauer H."/>
            <person name="Lehrach H."/>
            <person name="Jacob H.J."/>
            <person name="Bromberg S."/>
            <person name="Gullings-Handley J."/>
            <person name="Jensen-Seaman M.I."/>
            <person name="Kwitek A.E."/>
            <person name="Lazar J."/>
            <person name="Pasko D."/>
            <person name="Tonellato P.J."/>
            <person name="Twigger S."/>
            <person name="Ponting C.P."/>
            <person name="Duarte J.M."/>
            <person name="Rice S."/>
            <person name="Goodstadt L."/>
            <person name="Beatson S.A."/>
            <person name="Emes R.D."/>
            <person name="Winter E.E."/>
            <person name="Webber C."/>
            <person name="Brandt P."/>
            <person name="Nyakatura G."/>
            <person name="Adetobi M."/>
            <person name="Chiaromonte F."/>
            <person name="Elnitski L."/>
            <person name="Eswara P."/>
            <person name="Hardison R.C."/>
            <person name="Hou M."/>
            <person name="Kolbe D."/>
            <person name="Makova K."/>
            <person name="Miller W."/>
            <person name="Nekrutenko A."/>
            <person name="Riemer C."/>
            <person name="Schwartz S."/>
            <person name="Taylor J."/>
            <person name="Yang S."/>
            <person name="Zhang Y."/>
            <person name="Lindpaintner K."/>
            <person name="Andrews T.D."/>
            <person name="Caccamo M."/>
            <person name="Clamp M."/>
            <person name="Clarke L."/>
            <person name="Curwen V."/>
            <person name="Durbin R.M."/>
            <person name="Eyras E."/>
            <person name="Searle S.M."/>
            <person name="Cooper G.M."/>
            <person name="Batzoglou S."/>
            <person name="Brudno M."/>
            <person name="Sidow A."/>
            <person name="Stone E.A."/>
            <person name="Payseur B.A."/>
            <person name="Bourque G."/>
            <person name="Lopez-Otin C."/>
            <person name="Puente X.S."/>
            <person name="Chakrabarti K."/>
            <person name="Chatterji S."/>
            <person name="Dewey C."/>
            <person name="Pachter L."/>
            <person name="Bray N."/>
            <person name="Yap V.B."/>
            <person name="Caspi A."/>
            <person name="Tesler G."/>
            <person name="Pevzner P.A."/>
            <person name="Haussler D."/>
            <person name="Roskin K.M."/>
            <person name="Baertsch R."/>
            <person name="Clawson H."/>
            <person name="Furey T.S."/>
            <person name="Hinrichs A.S."/>
            <person name="Karolchik D."/>
            <person name="Kent W.J."/>
            <person name="Rosenbloom K.R."/>
            <person name="Trumbower H."/>
            <person name="Weirauch M."/>
            <person name="Cooper D.N."/>
            <person name="Stenson P.D."/>
            <person name="Ma B."/>
            <person name="Brent M."/>
            <person name="Arumugam M."/>
            <person name="Shteynberg D."/>
            <person name="Copley R.R."/>
            <person name="Taylor M.S."/>
            <person name="Riethman H."/>
            <person name="Mudunuri U."/>
            <person name="Peterson J."/>
            <person name="Guyer M."/>
            <person name="Felsenfeld A."/>
            <person name="Old S."/>
            <person name="Mockrin S."/>
            <person name="Collins F.S."/>
        </authorList>
    </citation>
    <scope>NUCLEOTIDE SEQUENCE [LARGE SCALE GENOMIC DNA]</scope>
    <source>
        <strain>Brown Norway</strain>
    </source>
</reference>
<reference key="2">
    <citation type="journal article" date="1993" name="FEBS Lett.">
        <title>Multiple genes for G protein-coupled receptors and their expression in lingual epithelia.</title>
        <authorList>
            <person name="Abe K."/>
            <person name="Kusakabe Y."/>
            <person name="Tanemura K."/>
            <person name="Emori Y."/>
            <person name="Arai S."/>
        </authorList>
    </citation>
    <scope>NUCLEOTIDE SEQUENCE [MRNA] OF 59-292</scope>
    <source>
        <strain>Fischer</strain>
        <tissue>Tongue epithelium</tissue>
    </source>
</reference>
<evidence type="ECO:0000255" key="1"/>
<evidence type="ECO:0000255" key="2">
    <source>
        <dbReference type="PROSITE-ProRule" id="PRU00521"/>
    </source>
</evidence>
<evidence type="ECO:0000305" key="3"/>
<protein>
    <recommendedName>
        <fullName>Olfactory receptor 1073</fullName>
    </recommendedName>
    <alternativeName>
        <fullName>Putative gustatory receptor PTE45</fullName>
    </alternativeName>
</protein>
<dbReference type="EMBL" id="AC106438">
    <property type="status" value="NOT_ANNOTATED_CDS"/>
    <property type="molecule type" value="Genomic_DNA"/>
</dbReference>
<dbReference type="PIR" id="S29000">
    <property type="entry name" value="S29000"/>
</dbReference>
<dbReference type="RefSeq" id="NP_001000998.1">
    <property type="nucleotide sequence ID" value="NM_001000998.1"/>
</dbReference>
<dbReference type="SMR" id="P35898"/>
<dbReference type="FunCoup" id="P35898">
    <property type="interactions" value="1004"/>
</dbReference>
<dbReference type="STRING" id="10116.ENSRNOP00000046729"/>
<dbReference type="GlyCosmos" id="P35898">
    <property type="glycosylation" value="2 sites, No reported glycans"/>
</dbReference>
<dbReference type="GlyGen" id="P35898">
    <property type="glycosylation" value="2 sites"/>
</dbReference>
<dbReference type="PaxDb" id="10116-ENSRNOP00000046729"/>
<dbReference type="Ensembl" id="ENSRNOT00000042747.4">
    <property type="protein sequence ID" value="ENSRNOP00000046729.3"/>
    <property type="gene ID" value="ENSRNOG00000031688.4"/>
</dbReference>
<dbReference type="GeneID" id="405362"/>
<dbReference type="KEGG" id="rno:405362"/>
<dbReference type="UCSC" id="RGD:1332740">
    <property type="organism name" value="rat"/>
</dbReference>
<dbReference type="AGR" id="RGD:1332740"/>
<dbReference type="CTD" id="405362"/>
<dbReference type="RGD" id="1332740">
    <property type="gene designation" value="Olr1073"/>
</dbReference>
<dbReference type="eggNOG" id="ENOG502TAHF">
    <property type="taxonomic scope" value="Eukaryota"/>
</dbReference>
<dbReference type="GeneTree" id="ENSGT00940000163952"/>
<dbReference type="HOGENOM" id="CLU_012526_1_0_1"/>
<dbReference type="InParanoid" id="P35898"/>
<dbReference type="OMA" id="QICFSTL"/>
<dbReference type="OrthoDB" id="71537at9989"/>
<dbReference type="PhylomeDB" id="P35898"/>
<dbReference type="TreeFam" id="TF337210"/>
<dbReference type="PRO" id="PR:P35898"/>
<dbReference type="Proteomes" id="UP000002494">
    <property type="component" value="Chromosome 7"/>
</dbReference>
<dbReference type="GO" id="GO:0005886">
    <property type="term" value="C:plasma membrane"/>
    <property type="evidence" value="ECO:0000318"/>
    <property type="project" value="GO_Central"/>
</dbReference>
<dbReference type="GO" id="GO:0004930">
    <property type="term" value="F:G protein-coupled receptor activity"/>
    <property type="evidence" value="ECO:0007669"/>
    <property type="project" value="UniProtKB-KW"/>
</dbReference>
<dbReference type="GO" id="GO:0004984">
    <property type="term" value="F:olfactory receptor activity"/>
    <property type="evidence" value="ECO:0000318"/>
    <property type="project" value="GO_Central"/>
</dbReference>
<dbReference type="GO" id="GO:0007165">
    <property type="term" value="P:signal transduction"/>
    <property type="evidence" value="ECO:0000318"/>
    <property type="project" value="GO_Central"/>
</dbReference>
<dbReference type="CDD" id="cd15234">
    <property type="entry name" value="7tmA_OR7-like"/>
    <property type="match status" value="1"/>
</dbReference>
<dbReference type="FunFam" id="1.10.1220.70:FF:000001">
    <property type="entry name" value="Olfactory receptor"/>
    <property type="match status" value="1"/>
</dbReference>
<dbReference type="FunFam" id="1.20.1070.10:FF:000009">
    <property type="entry name" value="Olfactory receptor"/>
    <property type="match status" value="1"/>
</dbReference>
<dbReference type="Gene3D" id="1.20.1070.10">
    <property type="entry name" value="Rhodopsin 7-helix transmembrane proteins"/>
    <property type="match status" value="1"/>
</dbReference>
<dbReference type="InterPro" id="IPR000276">
    <property type="entry name" value="GPCR_Rhodpsn"/>
</dbReference>
<dbReference type="InterPro" id="IPR017452">
    <property type="entry name" value="GPCR_Rhodpsn_7TM"/>
</dbReference>
<dbReference type="InterPro" id="IPR000725">
    <property type="entry name" value="Olfact_rcpt"/>
</dbReference>
<dbReference type="PANTHER" id="PTHR48001">
    <property type="entry name" value="OLFACTORY RECEPTOR"/>
    <property type="match status" value="1"/>
</dbReference>
<dbReference type="Pfam" id="PF13853">
    <property type="entry name" value="7tm_4"/>
    <property type="match status" value="1"/>
</dbReference>
<dbReference type="PRINTS" id="PR00237">
    <property type="entry name" value="GPCRRHODOPSN"/>
</dbReference>
<dbReference type="PRINTS" id="PR00245">
    <property type="entry name" value="OLFACTORYR"/>
</dbReference>
<dbReference type="SUPFAM" id="SSF81321">
    <property type="entry name" value="Family A G protein-coupled receptor-like"/>
    <property type="match status" value="1"/>
</dbReference>
<dbReference type="PROSITE" id="PS00237">
    <property type="entry name" value="G_PROTEIN_RECEP_F1_1"/>
    <property type="match status" value="1"/>
</dbReference>
<dbReference type="PROSITE" id="PS50262">
    <property type="entry name" value="G_PROTEIN_RECEP_F1_2"/>
    <property type="match status" value="1"/>
</dbReference>
<sequence length="311" mass="35013">MKQQNDTQILQFLLLGLSENTELQPLIYWLFFSMYLVTVWGNLIIILATVLDFRLHTAMYFFLCNLSFVDICLISTTIPKMLANVHLNHKAITYEGCIMQIYFFTLFVGLDNFLLAVMAYDRFVAICHPLRYTSIMTPHLCMSLVLVSWIASVLNSSLQSFLVLQLSFCTEVEIPHFFCELSMLVHLACSDTFLSDMAMNVLAALLGGGCLVGILYSYSKIVSSIQAISSAEGKYKAFSTCVSHLSVVSLFYCTLLGVYLSSAVTQNSHSTAATSLMYTVVTPMLNPFIYSLRNDNIKRALKNFVKKKLEK</sequence>
<feature type="chain" id="PRO_0000069670" description="Olfactory receptor 1073">
    <location>
        <begin position="1"/>
        <end position="311"/>
    </location>
</feature>
<feature type="topological domain" description="Extracellular" evidence="1">
    <location>
        <begin position="1"/>
        <end position="25"/>
    </location>
</feature>
<feature type="transmembrane region" description="Helical; Name=1" evidence="1">
    <location>
        <begin position="26"/>
        <end position="46"/>
    </location>
</feature>
<feature type="topological domain" description="Cytoplasmic" evidence="1">
    <location>
        <begin position="47"/>
        <end position="57"/>
    </location>
</feature>
<feature type="transmembrane region" description="Helical; Name=2" evidence="1">
    <location>
        <begin position="58"/>
        <end position="78"/>
    </location>
</feature>
<feature type="topological domain" description="Extracellular" evidence="1">
    <location>
        <begin position="79"/>
        <end position="97"/>
    </location>
</feature>
<feature type="transmembrane region" description="Helical; Name=3" evidence="1">
    <location>
        <begin position="98"/>
        <end position="118"/>
    </location>
</feature>
<feature type="topological domain" description="Cytoplasmic" evidence="1">
    <location>
        <begin position="119"/>
        <end position="133"/>
    </location>
</feature>
<feature type="transmembrane region" description="Helical; Name=4" evidence="1">
    <location>
        <begin position="134"/>
        <end position="154"/>
    </location>
</feature>
<feature type="topological domain" description="Extracellular" evidence="1">
    <location>
        <begin position="155"/>
        <end position="196"/>
    </location>
</feature>
<feature type="transmembrane region" description="Helical; Name=5" evidence="1">
    <location>
        <begin position="197"/>
        <end position="217"/>
    </location>
</feature>
<feature type="topological domain" description="Cytoplasmic" evidence="1">
    <location>
        <begin position="218"/>
        <end position="244"/>
    </location>
</feature>
<feature type="transmembrane region" description="Helical; Name=6" evidence="1">
    <location>
        <begin position="245"/>
        <end position="265"/>
    </location>
</feature>
<feature type="topological domain" description="Extracellular" evidence="1">
    <location>
        <begin position="266"/>
        <end position="271"/>
    </location>
</feature>
<feature type="transmembrane region" description="Helical; Name=7" evidence="1">
    <location>
        <begin position="272"/>
        <end position="292"/>
    </location>
</feature>
<feature type="topological domain" description="Cytoplasmic" evidence="1">
    <location>
        <begin position="293"/>
        <end position="311"/>
    </location>
</feature>
<feature type="glycosylation site" description="N-linked (GlcNAc...) asparagine" evidence="1">
    <location>
        <position position="5"/>
    </location>
</feature>
<feature type="glycosylation site" description="N-linked (GlcNAc...) asparagine" evidence="1">
    <location>
        <position position="155"/>
    </location>
</feature>
<feature type="disulfide bond" evidence="2">
    <location>
        <begin position="97"/>
        <end position="179"/>
    </location>
</feature>
<feature type="sequence conflict" description="In Ref. 2." evidence="3" ref="2">
    <original>F</original>
    <variation>L</variation>
    <location>
        <position position="61"/>
    </location>
</feature>
<feature type="sequence conflict" description="In Ref. 2." evidence="3" ref="2">
    <original>LC</original>
    <variation>FS</variation>
    <location>
        <begin position="63"/>
        <end position="64"/>
    </location>
</feature>
<feature type="sequence conflict" description="In Ref. 2." evidence="3" ref="2">
    <original>V</original>
    <variation>A</variation>
    <location>
        <position position="69"/>
    </location>
</feature>
<feature type="sequence conflict" description="In Ref. 2." evidence="3" ref="2">
    <original>V</original>
    <variation>E</variation>
    <location>
        <position position="85"/>
    </location>
</feature>
<feature type="sequence conflict" description="In Ref. 2." evidence="3" ref="2">
    <original>M</original>
    <variation>H</variation>
    <location>
        <position position="142"/>
    </location>
</feature>
<feature type="sequence conflict" description="In Ref. 2." evidence="3" ref="2">
    <original>A</original>
    <variation>T</variation>
    <location>
        <position position="151"/>
    </location>
</feature>
<feature type="sequence conflict" description="In Ref. 2." evidence="3" ref="2">
    <original>SL</original>
    <variation>FF</variation>
    <location>
        <begin position="291"/>
        <end position="292"/>
    </location>
</feature>
<accession>P35898</accession>
<name>O1073_RAT</name>
<gene>
    <name type="primary">Olr1073</name>
</gene>
<comment type="function">
    <text>Possible taste receptor.</text>
</comment>
<comment type="subcellular location">
    <subcellularLocation>
        <location>Cell membrane</location>
        <topology>Multi-pass membrane protein</topology>
    </subcellularLocation>
</comment>
<comment type="tissue specificity">
    <text>Tongue specific.</text>
</comment>
<comment type="similarity">
    <text evidence="2">Belongs to the G-protein coupled receptor 1 family.</text>
</comment>
<organism>
    <name type="scientific">Rattus norvegicus</name>
    <name type="common">Rat</name>
    <dbReference type="NCBI Taxonomy" id="10116"/>
    <lineage>
        <taxon>Eukaryota</taxon>
        <taxon>Metazoa</taxon>
        <taxon>Chordata</taxon>
        <taxon>Craniata</taxon>
        <taxon>Vertebrata</taxon>
        <taxon>Euteleostomi</taxon>
        <taxon>Mammalia</taxon>
        <taxon>Eutheria</taxon>
        <taxon>Euarchontoglires</taxon>
        <taxon>Glires</taxon>
        <taxon>Rodentia</taxon>
        <taxon>Myomorpha</taxon>
        <taxon>Muroidea</taxon>
        <taxon>Muridae</taxon>
        <taxon>Murinae</taxon>
        <taxon>Rattus</taxon>
    </lineage>
</organism>